<keyword id="KW-0067">ATP-binding</keyword>
<keyword id="KW-0436">Ligase</keyword>
<keyword id="KW-0547">Nucleotide-binding</keyword>
<keyword id="KW-0648">Protein biosynthesis</keyword>
<evidence type="ECO:0000255" key="1">
    <source>
        <dbReference type="HAMAP-Rule" id="MF_00121"/>
    </source>
</evidence>
<proteinExistence type="inferred from homology"/>
<name>GATB_ANAMM</name>
<comment type="function">
    <text evidence="1">Allows the formation of correctly charged Asn-tRNA(Asn) or Gln-tRNA(Gln) through the transamidation of misacylated Asp-tRNA(Asn) or Glu-tRNA(Gln) in organisms which lack either or both of asparaginyl-tRNA or glutaminyl-tRNA synthetases. The reaction takes place in the presence of glutamine and ATP through an activated phospho-Asp-tRNA(Asn) or phospho-Glu-tRNA(Gln).</text>
</comment>
<comment type="catalytic activity">
    <reaction evidence="1">
        <text>L-glutamyl-tRNA(Gln) + L-glutamine + ATP + H2O = L-glutaminyl-tRNA(Gln) + L-glutamate + ADP + phosphate + H(+)</text>
        <dbReference type="Rhea" id="RHEA:17521"/>
        <dbReference type="Rhea" id="RHEA-COMP:9681"/>
        <dbReference type="Rhea" id="RHEA-COMP:9684"/>
        <dbReference type="ChEBI" id="CHEBI:15377"/>
        <dbReference type="ChEBI" id="CHEBI:15378"/>
        <dbReference type="ChEBI" id="CHEBI:29985"/>
        <dbReference type="ChEBI" id="CHEBI:30616"/>
        <dbReference type="ChEBI" id="CHEBI:43474"/>
        <dbReference type="ChEBI" id="CHEBI:58359"/>
        <dbReference type="ChEBI" id="CHEBI:78520"/>
        <dbReference type="ChEBI" id="CHEBI:78521"/>
        <dbReference type="ChEBI" id="CHEBI:456216"/>
    </reaction>
</comment>
<comment type="catalytic activity">
    <reaction evidence="1">
        <text>L-aspartyl-tRNA(Asn) + L-glutamine + ATP + H2O = L-asparaginyl-tRNA(Asn) + L-glutamate + ADP + phosphate + 2 H(+)</text>
        <dbReference type="Rhea" id="RHEA:14513"/>
        <dbReference type="Rhea" id="RHEA-COMP:9674"/>
        <dbReference type="Rhea" id="RHEA-COMP:9677"/>
        <dbReference type="ChEBI" id="CHEBI:15377"/>
        <dbReference type="ChEBI" id="CHEBI:15378"/>
        <dbReference type="ChEBI" id="CHEBI:29985"/>
        <dbReference type="ChEBI" id="CHEBI:30616"/>
        <dbReference type="ChEBI" id="CHEBI:43474"/>
        <dbReference type="ChEBI" id="CHEBI:58359"/>
        <dbReference type="ChEBI" id="CHEBI:78515"/>
        <dbReference type="ChEBI" id="CHEBI:78516"/>
        <dbReference type="ChEBI" id="CHEBI:456216"/>
    </reaction>
</comment>
<comment type="subunit">
    <text evidence="1">Heterotrimer of A, B and C subunits.</text>
</comment>
<comment type="similarity">
    <text evidence="1">Belongs to the GatB/GatE family. GatB subfamily.</text>
</comment>
<organism>
    <name type="scientific">Anaplasma marginale (strain St. Maries)</name>
    <dbReference type="NCBI Taxonomy" id="234826"/>
    <lineage>
        <taxon>Bacteria</taxon>
        <taxon>Pseudomonadati</taxon>
        <taxon>Pseudomonadota</taxon>
        <taxon>Alphaproteobacteria</taxon>
        <taxon>Rickettsiales</taxon>
        <taxon>Anaplasmataceae</taxon>
        <taxon>Anaplasma</taxon>
    </lineage>
</organism>
<protein>
    <recommendedName>
        <fullName evidence="1">Aspartyl/glutamyl-tRNA(Asn/Gln) amidotransferase subunit B</fullName>
        <shortName evidence="1">Asp/Glu-ADT subunit B</shortName>
        <ecNumber evidence="1">6.3.5.-</ecNumber>
    </recommendedName>
</protein>
<feature type="chain" id="PRO_0000241188" description="Aspartyl/glutamyl-tRNA(Asn/Gln) amidotransferase subunit B">
    <location>
        <begin position="1"/>
        <end position="485"/>
    </location>
</feature>
<reference key="1">
    <citation type="journal article" date="2005" name="Proc. Natl. Acad. Sci. U.S.A.">
        <title>Complete genome sequencing of Anaplasma marginale reveals that the surface is skewed to two superfamilies of outer membrane proteins.</title>
        <authorList>
            <person name="Brayton K.A."/>
            <person name="Kappmeyer L.S."/>
            <person name="Herndon D.R."/>
            <person name="Dark M.J."/>
            <person name="Tibbals D.L."/>
            <person name="Palmer G.H."/>
            <person name="McGuire T.C."/>
            <person name="Knowles D.P. Jr."/>
        </authorList>
    </citation>
    <scope>NUCLEOTIDE SEQUENCE [LARGE SCALE GENOMIC DNA]</scope>
    <source>
        <strain>St. Maries</strain>
    </source>
</reference>
<gene>
    <name evidence="1" type="primary">gatB</name>
    <name type="ordered locus">AM426</name>
</gene>
<sequence>MAANTGIIKGNTHEWEMVVGLEVHAQVISNSKLFSGASTGFCSEPNTQVALFDVAMPGTLPVLNARCVEQAVRTSLALSCEVHKYSVFDRKNYFYPDLASGYQITQFYFPIATDGYITLDECCSKDVRISRIHLEQDAGKSMHVGDKTYLDFNRAGVALMEIVSAPDFRSPEEAAEYIKKLRIILRAIGTCDGDMENGSLRCDANVSVRKVGDSNLGARSEIKNLNSIKHLAQAIRHEACRQVEVLESGGVVSQSTMLFDVDTCTTRSMREKEDACDYRYFPDPDLLPLELTTAFIDNIRASLPELPSEKKRRYMQDIGLSRYDADILSSDKDVSAYFESVVAKHAPDLAVPWITGELFGALNKRGSSIADSPVSAGRLVELLDLVADGTISGKMAKQVFALMFETEKSASDIVREQGLCQITSEETLAPIVDRIISESPDEVAEYRQGKTKLLGYFVGKVMKETNGQANPGLVNTLIKRRLAED</sequence>
<accession>Q5PB50</accession>
<dbReference type="EC" id="6.3.5.-" evidence="1"/>
<dbReference type="EMBL" id="CP000030">
    <property type="protein sequence ID" value="AAV86479.1"/>
    <property type="molecule type" value="Genomic_DNA"/>
</dbReference>
<dbReference type="RefSeq" id="WP_011114265.1">
    <property type="nucleotide sequence ID" value="NC_004842.2"/>
</dbReference>
<dbReference type="SMR" id="Q5PB50"/>
<dbReference type="KEGG" id="ama:AM426"/>
<dbReference type="HOGENOM" id="CLU_019240_0_0_5"/>
<dbReference type="GO" id="GO:0050566">
    <property type="term" value="F:asparaginyl-tRNA synthase (glutamine-hydrolyzing) activity"/>
    <property type="evidence" value="ECO:0007669"/>
    <property type="project" value="RHEA"/>
</dbReference>
<dbReference type="GO" id="GO:0005524">
    <property type="term" value="F:ATP binding"/>
    <property type="evidence" value="ECO:0007669"/>
    <property type="project" value="UniProtKB-KW"/>
</dbReference>
<dbReference type="GO" id="GO:0050567">
    <property type="term" value="F:glutaminyl-tRNA synthase (glutamine-hydrolyzing) activity"/>
    <property type="evidence" value="ECO:0007669"/>
    <property type="project" value="UniProtKB-UniRule"/>
</dbReference>
<dbReference type="GO" id="GO:0070681">
    <property type="term" value="P:glutaminyl-tRNAGln biosynthesis via transamidation"/>
    <property type="evidence" value="ECO:0007669"/>
    <property type="project" value="TreeGrafter"/>
</dbReference>
<dbReference type="GO" id="GO:0006412">
    <property type="term" value="P:translation"/>
    <property type="evidence" value="ECO:0007669"/>
    <property type="project" value="UniProtKB-UniRule"/>
</dbReference>
<dbReference type="FunFam" id="1.10.10.410:FF:000001">
    <property type="entry name" value="Aspartyl/glutamyl-tRNA(Asn/Gln) amidotransferase subunit B"/>
    <property type="match status" value="1"/>
</dbReference>
<dbReference type="Gene3D" id="1.10.10.410">
    <property type="match status" value="1"/>
</dbReference>
<dbReference type="Gene3D" id="1.10.150.380">
    <property type="entry name" value="GatB domain, N-terminal subdomain"/>
    <property type="match status" value="1"/>
</dbReference>
<dbReference type="HAMAP" id="MF_00121">
    <property type="entry name" value="GatB"/>
    <property type="match status" value="1"/>
</dbReference>
<dbReference type="InterPro" id="IPR017959">
    <property type="entry name" value="Asn/Gln-tRNA_amidoTrfase_suB/E"/>
</dbReference>
<dbReference type="InterPro" id="IPR006075">
    <property type="entry name" value="Asn/Gln-tRNA_Trfase_suB/E_cat"/>
</dbReference>
<dbReference type="InterPro" id="IPR018027">
    <property type="entry name" value="Asn/Gln_amidotransferase"/>
</dbReference>
<dbReference type="InterPro" id="IPR003789">
    <property type="entry name" value="Asn/Gln_tRNA_amidoTrase-B-like"/>
</dbReference>
<dbReference type="InterPro" id="IPR004413">
    <property type="entry name" value="GatB"/>
</dbReference>
<dbReference type="InterPro" id="IPR042114">
    <property type="entry name" value="GatB_C_1"/>
</dbReference>
<dbReference type="InterPro" id="IPR023168">
    <property type="entry name" value="GatB_Yqey_C_2"/>
</dbReference>
<dbReference type="InterPro" id="IPR017958">
    <property type="entry name" value="Gln-tRNA_amidoTrfase_suB_CS"/>
</dbReference>
<dbReference type="InterPro" id="IPR014746">
    <property type="entry name" value="Gln_synth/guanido_kin_cat_dom"/>
</dbReference>
<dbReference type="NCBIfam" id="TIGR00133">
    <property type="entry name" value="gatB"/>
    <property type="match status" value="1"/>
</dbReference>
<dbReference type="NCBIfam" id="NF004012">
    <property type="entry name" value="PRK05477.1-2"/>
    <property type="match status" value="1"/>
</dbReference>
<dbReference type="NCBIfam" id="NF004014">
    <property type="entry name" value="PRK05477.1-4"/>
    <property type="match status" value="1"/>
</dbReference>
<dbReference type="NCBIfam" id="NF004015">
    <property type="entry name" value="PRK05477.1-5"/>
    <property type="match status" value="1"/>
</dbReference>
<dbReference type="PANTHER" id="PTHR11659">
    <property type="entry name" value="GLUTAMYL-TRNA GLN AMIDOTRANSFERASE SUBUNIT B MITOCHONDRIAL AND PROKARYOTIC PET112-RELATED"/>
    <property type="match status" value="1"/>
</dbReference>
<dbReference type="PANTHER" id="PTHR11659:SF0">
    <property type="entry name" value="GLUTAMYL-TRNA(GLN) AMIDOTRANSFERASE SUBUNIT B, MITOCHONDRIAL"/>
    <property type="match status" value="1"/>
</dbReference>
<dbReference type="Pfam" id="PF02934">
    <property type="entry name" value="GatB_N"/>
    <property type="match status" value="1"/>
</dbReference>
<dbReference type="Pfam" id="PF02637">
    <property type="entry name" value="GatB_Yqey"/>
    <property type="match status" value="1"/>
</dbReference>
<dbReference type="SMART" id="SM00845">
    <property type="entry name" value="GatB_Yqey"/>
    <property type="match status" value="1"/>
</dbReference>
<dbReference type="SUPFAM" id="SSF89095">
    <property type="entry name" value="GatB/YqeY motif"/>
    <property type="match status" value="1"/>
</dbReference>
<dbReference type="SUPFAM" id="SSF55931">
    <property type="entry name" value="Glutamine synthetase/guanido kinase"/>
    <property type="match status" value="1"/>
</dbReference>
<dbReference type="PROSITE" id="PS01234">
    <property type="entry name" value="GATB"/>
    <property type="match status" value="1"/>
</dbReference>